<accession>P9WMX0</accession>
<accession>L0T4G0</accession>
<accession>P95042</accession>
<accession>Q7D9E7</accession>
<comment type="function">
    <text evidence="1">Involved in the biosynthesis of the enzyme cofactor mycofactocin (MFT). Acts as a glycosyltransferase that catalyzes the oligoglycosylation of pre-mycofactocin (PMFT), adding up to nine beta-1,4-linked glucose residues. Is required for the in vivo ethanol assimilation in M.smegmatis.</text>
</comment>
<comment type="subcellular location">
    <subcellularLocation>
        <location evidence="2">Cell membrane</location>
        <topology evidence="2">Single-pass membrane protein</topology>
    </subcellularLocation>
</comment>
<comment type="similarity">
    <text evidence="3">Belongs to the glycosyltransferase 2 family.</text>
</comment>
<organism>
    <name type="scientific">Mycobacterium tuberculosis (strain CDC 1551 / Oshkosh)</name>
    <dbReference type="NCBI Taxonomy" id="83331"/>
    <lineage>
        <taxon>Bacteria</taxon>
        <taxon>Bacillati</taxon>
        <taxon>Actinomycetota</taxon>
        <taxon>Actinomycetes</taxon>
        <taxon>Mycobacteriales</taxon>
        <taxon>Mycobacteriaceae</taxon>
        <taxon>Mycobacterium</taxon>
        <taxon>Mycobacterium tuberculosis complex</taxon>
    </lineage>
</organism>
<sequence length="470" mass="50667">MTATRLPDGFAVQVDRRVRVLGDGSALLGGSPTRLLRLAPAARGLLCDGRLKVRDEVSAELARILLDATVAHPRPPSGPSHRDVTVVIPVRNNASGLRRLVTSLRGLRVIVVDDGSACPVESDDFVGAHCDIEVLHHPHSKGPAAARNTGLAACTTDFVAFLDSDVTPRRGWLESLLGHFCDPTVALVAPRIVSLVEGENPVARYEALHSSLDLGQREAPVLPHSTVSYVPSAAIVCRSSAIRDVGGFDETMHSGEDVDLCWRLIEAGARLRYEPIALVAHDHRTQLRDWIARKAFYGGSAAPLAVRHPDKTAPLVISGGALMAWILMSIGTGLGRLASLVIAVLTGRRIARAMRCAETSFLDVLAVATRGLWAAALQLASAICRHYWPLALLAAILSRRCRRVVLIAAVVDGVVDWLRRREGADDDAEPIGPLTYLVLKRVDDLAYGAGLWYGVVRERNIGALKPQIRT</sequence>
<reference key="1">
    <citation type="journal article" date="2002" name="J. Bacteriol.">
        <title>Whole-genome comparison of Mycobacterium tuberculosis clinical and laboratory strains.</title>
        <authorList>
            <person name="Fleischmann R.D."/>
            <person name="Alland D."/>
            <person name="Eisen J.A."/>
            <person name="Carpenter L."/>
            <person name="White O."/>
            <person name="Peterson J.D."/>
            <person name="DeBoy R.T."/>
            <person name="Dodson R.J."/>
            <person name="Gwinn M.L."/>
            <person name="Haft D.H."/>
            <person name="Hickey E.K."/>
            <person name="Kolonay J.F."/>
            <person name="Nelson W.C."/>
            <person name="Umayam L.A."/>
            <person name="Ermolaeva M.D."/>
            <person name="Salzberg S.L."/>
            <person name="Delcher A."/>
            <person name="Utterback T.R."/>
            <person name="Weidman J.F."/>
            <person name="Khouri H.M."/>
            <person name="Gill J."/>
            <person name="Mikula A."/>
            <person name="Bishai W."/>
            <person name="Jacobs W.R. Jr."/>
            <person name="Venter J.C."/>
            <person name="Fraser C.M."/>
        </authorList>
    </citation>
    <scope>NUCLEOTIDE SEQUENCE [LARGE SCALE GENOMIC DNA]</scope>
    <source>
        <strain>CDC 1551 / Oshkosh</strain>
    </source>
</reference>
<protein>
    <recommendedName>
        <fullName>Pre-mycofactocin glycosyltransferase</fullName>
        <ecNumber evidence="1">2.4.1.-</ecNumber>
    </recommendedName>
</protein>
<proteinExistence type="inferred from homology"/>
<keyword id="KW-1003">Cell membrane</keyword>
<keyword id="KW-0328">Glycosyltransferase</keyword>
<keyword id="KW-0472">Membrane</keyword>
<keyword id="KW-1185">Reference proteome</keyword>
<keyword id="KW-0808">Transferase</keyword>
<keyword id="KW-0812">Transmembrane</keyword>
<keyword id="KW-1133">Transmembrane helix</keyword>
<evidence type="ECO:0000250" key="1">
    <source>
        <dbReference type="UniProtKB" id="A0QSC1"/>
    </source>
</evidence>
<evidence type="ECO:0000255" key="2"/>
<evidence type="ECO:0000305" key="3"/>
<gene>
    <name type="primary">mftF</name>
    <name type="ordered locus">MT0723</name>
</gene>
<dbReference type="EC" id="2.4.1.-" evidence="1"/>
<dbReference type="EMBL" id="AE000516">
    <property type="protein sequence ID" value="AAK44952.1"/>
    <property type="molecule type" value="Genomic_DNA"/>
</dbReference>
<dbReference type="PIR" id="C70641">
    <property type="entry name" value="C70641"/>
</dbReference>
<dbReference type="RefSeq" id="WP_003403501.1">
    <property type="nucleotide sequence ID" value="NZ_KK341227.1"/>
</dbReference>
<dbReference type="SMR" id="P9WMX0"/>
<dbReference type="CAZy" id="GT2">
    <property type="family name" value="Glycosyltransferase Family 2"/>
</dbReference>
<dbReference type="KEGG" id="mtc:MT0723"/>
<dbReference type="PATRIC" id="fig|83331.31.peg.773"/>
<dbReference type="HOGENOM" id="CLU_028391_0_0_11"/>
<dbReference type="Proteomes" id="UP000001020">
    <property type="component" value="Chromosome"/>
</dbReference>
<dbReference type="GO" id="GO:0005886">
    <property type="term" value="C:plasma membrane"/>
    <property type="evidence" value="ECO:0007669"/>
    <property type="project" value="UniProtKB-SubCell"/>
</dbReference>
<dbReference type="GO" id="GO:0016757">
    <property type="term" value="F:glycosyltransferase activity"/>
    <property type="evidence" value="ECO:0007669"/>
    <property type="project" value="UniProtKB-KW"/>
</dbReference>
<dbReference type="Gene3D" id="3.90.550.10">
    <property type="entry name" value="Spore Coat Polysaccharide Biosynthesis Protein SpsA, Chain A"/>
    <property type="match status" value="1"/>
</dbReference>
<dbReference type="InterPro" id="IPR001173">
    <property type="entry name" value="Glyco_trans_2-like"/>
</dbReference>
<dbReference type="InterPro" id="IPR023981">
    <property type="entry name" value="MftF"/>
</dbReference>
<dbReference type="InterPro" id="IPR029044">
    <property type="entry name" value="Nucleotide-diphossugar_trans"/>
</dbReference>
<dbReference type="NCBIfam" id="TIGR03965">
    <property type="entry name" value="mycofact_glyco"/>
    <property type="match status" value="1"/>
</dbReference>
<dbReference type="PANTHER" id="PTHR43646">
    <property type="entry name" value="GLYCOSYLTRANSFERASE"/>
    <property type="match status" value="1"/>
</dbReference>
<dbReference type="PANTHER" id="PTHR43646:SF6">
    <property type="entry name" value="PRE-MYCOFACTOCIN GLYCOSYLTRANSFERASE"/>
    <property type="match status" value="1"/>
</dbReference>
<dbReference type="Pfam" id="PF00535">
    <property type="entry name" value="Glycos_transf_2"/>
    <property type="match status" value="1"/>
</dbReference>
<dbReference type="SUPFAM" id="SSF53448">
    <property type="entry name" value="Nucleotide-diphospho-sugar transferases"/>
    <property type="match status" value="1"/>
</dbReference>
<name>MFTF_MYCTO</name>
<feature type="chain" id="PRO_0000427228" description="Pre-mycofactocin glycosyltransferase">
    <location>
        <begin position="1"/>
        <end position="470"/>
    </location>
</feature>
<feature type="transmembrane region" description="Helical" evidence="2">
    <location>
        <begin position="315"/>
        <end position="335"/>
    </location>
</feature>